<sequence>MFLPQEFIRRKRDGQPLDRDGMAAFVRGVTDGSVTEGQVAAFAMAVYFNDLSTDERVALTLAQRDSGDVLDWRALDLDGPVIDKHSTGGVGDVVSLMLGPMVAACGGYVPMISGRGLGHTGGTLDKLSAIPGYDVMPATDAFRRTVREVGVAIIGQTARLAPADKRIYAIRDVTATVESVAMITASILSKKLAAGLDGLVMDVKVGSGAFMPTAEKSAELARSIVDVGNGAGMKTTAILTDMNQSLAPCAGNALEVACAIDYLTGKSRPARLHDVTMALSAELLVTGGLARDVGHAREKLQQALDSGAAAERFARMVVALGGPADLLDAPARHLARAVVIVPVPAPASGVVQRVDCRALGLAVVALGGGRTRAEDAIDVSVGLSALAEIGQRVEAGEPLGFVHARDEATAAHAADAIRRGYVLGDTGEAPPTLYQRVD</sequence>
<evidence type="ECO:0000255" key="1">
    <source>
        <dbReference type="HAMAP-Rule" id="MF_01628"/>
    </source>
</evidence>
<proteinExistence type="inferred from homology"/>
<keyword id="KW-0328">Glycosyltransferase</keyword>
<keyword id="KW-0808">Transferase</keyword>
<gene>
    <name evidence="1" type="primary">deoA</name>
    <name type="ordered locus">BceJ2315_69820</name>
    <name type="ORF">BCAS0729</name>
</gene>
<feature type="chain" id="PRO_1000186248" description="Thymidine phosphorylase">
    <location>
        <begin position="1"/>
        <end position="438"/>
    </location>
</feature>
<organism>
    <name type="scientific">Burkholderia cenocepacia (strain ATCC BAA-245 / DSM 16553 / LMG 16656 / NCTC 13227 / J2315 / CF5610)</name>
    <name type="common">Burkholderia cepacia (strain J2315)</name>
    <dbReference type="NCBI Taxonomy" id="216591"/>
    <lineage>
        <taxon>Bacteria</taxon>
        <taxon>Pseudomonadati</taxon>
        <taxon>Pseudomonadota</taxon>
        <taxon>Betaproteobacteria</taxon>
        <taxon>Burkholderiales</taxon>
        <taxon>Burkholderiaceae</taxon>
        <taxon>Burkholderia</taxon>
        <taxon>Burkholderia cepacia complex</taxon>
    </lineage>
</organism>
<comment type="function">
    <text evidence="1">The enzymes which catalyze the reversible phosphorolysis of pyrimidine nucleosides are involved in the degradation of these compounds and in their utilization as carbon and energy sources, or in the rescue of pyrimidine bases for nucleotide synthesis.</text>
</comment>
<comment type="catalytic activity">
    <reaction evidence="1">
        <text>thymidine + phosphate = 2-deoxy-alpha-D-ribose 1-phosphate + thymine</text>
        <dbReference type="Rhea" id="RHEA:16037"/>
        <dbReference type="ChEBI" id="CHEBI:17748"/>
        <dbReference type="ChEBI" id="CHEBI:17821"/>
        <dbReference type="ChEBI" id="CHEBI:43474"/>
        <dbReference type="ChEBI" id="CHEBI:57259"/>
        <dbReference type="EC" id="2.4.2.4"/>
    </reaction>
</comment>
<comment type="pathway">
    <text evidence="1">Pyrimidine metabolism; dTMP biosynthesis via salvage pathway; dTMP from thymine: step 1/2.</text>
</comment>
<comment type="subunit">
    <text evidence="1">Homodimer.</text>
</comment>
<comment type="similarity">
    <text evidence="1">Belongs to the thymidine/pyrimidine-nucleoside phosphorylase family.</text>
</comment>
<protein>
    <recommendedName>
        <fullName evidence="1">Thymidine phosphorylase</fullName>
        <ecNumber evidence="1">2.4.2.4</ecNumber>
    </recommendedName>
    <alternativeName>
        <fullName evidence="1">TdRPase</fullName>
    </alternativeName>
</protein>
<dbReference type="EC" id="2.4.2.4" evidence="1"/>
<dbReference type="EMBL" id="AM747722">
    <property type="protein sequence ID" value="CAR57663.1"/>
    <property type="molecule type" value="Genomic_DNA"/>
</dbReference>
<dbReference type="RefSeq" id="WP_006485638.1">
    <property type="nucleotide sequence ID" value="NC_011002.1"/>
</dbReference>
<dbReference type="SMR" id="B4EPB7"/>
<dbReference type="KEGG" id="bcj:BCAS0729"/>
<dbReference type="eggNOG" id="COG0213">
    <property type="taxonomic scope" value="Bacteria"/>
</dbReference>
<dbReference type="HOGENOM" id="CLU_025040_0_1_4"/>
<dbReference type="BioCyc" id="BCEN216591:G1G1V-7755-MONOMER"/>
<dbReference type="UniPathway" id="UPA00578">
    <property type="reaction ID" value="UER00638"/>
</dbReference>
<dbReference type="Proteomes" id="UP000001035">
    <property type="component" value="Chromosome 3"/>
</dbReference>
<dbReference type="GO" id="GO:0005829">
    <property type="term" value="C:cytosol"/>
    <property type="evidence" value="ECO:0007669"/>
    <property type="project" value="TreeGrafter"/>
</dbReference>
<dbReference type="GO" id="GO:0004645">
    <property type="term" value="F:1,4-alpha-oligoglucan phosphorylase activity"/>
    <property type="evidence" value="ECO:0007669"/>
    <property type="project" value="InterPro"/>
</dbReference>
<dbReference type="GO" id="GO:0009032">
    <property type="term" value="F:thymidine phosphorylase activity"/>
    <property type="evidence" value="ECO:0007669"/>
    <property type="project" value="UniProtKB-UniRule"/>
</dbReference>
<dbReference type="GO" id="GO:0006206">
    <property type="term" value="P:pyrimidine nucleobase metabolic process"/>
    <property type="evidence" value="ECO:0007669"/>
    <property type="project" value="InterPro"/>
</dbReference>
<dbReference type="GO" id="GO:0046104">
    <property type="term" value="P:thymidine metabolic process"/>
    <property type="evidence" value="ECO:0007669"/>
    <property type="project" value="UniProtKB-UniRule"/>
</dbReference>
<dbReference type="FunFam" id="3.40.1030.10:FF:000001">
    <property type="entry name" value="Thymidine phosphorylase"/>
    <property type="match status" value="1"/>
</dbReference>
<dbReference type="Gene3D" id="3.40.1030.10">
    <property type="entry name" value="Nucleoside phosphorylase/phosphoribosyltransferase catalytic domain"/>
    <property type="match status" value="1"/>
</dbReference>
<dbReference type="Gene3D" id="3.90.1170.30">
    <property type="entry name" value="Pyrimidine nucleoside phosphorylase-like, C-terminal domain"/>
    <property type="match status" value="1"/>
</dbReference>
<dbReference type="Gene3D" id="1.20.970.10">
    <property type="entry name" value="Transferase, Pyrimidine Nucleoside Phosphorylase, Chain C"/>
    <property type="match status" value="1"/>
</dbReference>
<dbReference type="HAMAP" id="MF_01628">
    <property type="entry name" value="Thymid_phosp"/>
    <property type="match status" value="1"/>
</dbReference>
<dbReference type="InterPro" id="IPR000312">
    <property type="entry name" value="Glycosyl_Trfase_fam3"/>
</dbReference>
<dbReference type="InterPro" id="IPR017459">
    <property type="entry name" value="Glycosyl_Trfase_fam3_N_dom"/>
</dbReference>
<dbReference type="InterPro" id="IPR036320">
    <property type="entry name" value="Glycosyl_Trfase_fam3_N_dom_sf"/>
</dbReference>
<dbReference type="InterPro" id="IPR035902">
    <property type="entry name" value="Nuc_phospho_transferase"/>
</dbReference>
<dbReference type="InterPro" id="IPR036566">
    <property type="entry name" value="PYNP-like_C_sf"/>
</dbReference>
<dbReference type="InterPro" id="IPR013102">
    <property type="entry name" value="PYNP_C"/>
</dbReference>
<dbReference type="InterPro" id="IPR018090">
    <property type="entry name" value="Pyrmidine_PPas_bac/euk"/>
</dbReference>
<dbReference type="InterPro" id="IPR017872">
    <property type="entry name" value="Pyrmidine_PPase_CS"/>
</dbReference>
<dbReference type="InterPro" id="IPR000053">
    <property type="entry name" value="Thymidine/pyrmidine_PPase"/>
</dbReference>
<dbReference type="InterPro" id="IPR013465">
    <property type="entry name" value="Thymidine_Pase"/>
</dbReference>
<dbReference type="NCBIfam" id="NF004490">
    <property type="entry name" value="PRK05820.1"/>
    <property type="match status" value="1"/>
</dbReference>
<dbReference type="NCBIfam" id="TIGR02643">
    <property type="entry name" value="T_phosphoryl"/>
    <property type="match status" value="1"/>
</dbReference>
<dbReference type="NCBIfam" id="TIGR02644">
    <property type="entry name" value="Y_phosphoryl"/>
    <property type="match status" value="1"/>
</dbReference>
<dbReference type="PANTHER" id="PTHR10515">
    <property type="entry name" value="THYMIDINE PHOSPHORYLASE"/>
    <property type="match status" value="1"/>
</dbReference>
<dbReference type="PANTHER" id="PTHR10515:SF0">
    <property type="entry name" value="THYMIDINE PHOSPHORYLASE"/>
    <property type="match status" value="1"/>
</dbReference>
<dbReference type="Pfam" id="PF02885">
    <property type="entry name" value="Glycos_trans_3N"/>
    <property type="match status" value="1"/>
</dbReference>
<dbReference type="Pfam" id="PF00591">
    <property type="entry name" value="Glycos_transf_3"/>
    <property type="match status" value="1"/>
</dbReference>
<dbReference type="Pfam" id="PF07831">
    <property type="entry name" value="PYNP_C"/>
    <property type="match status" value="1"/>
</dbReference>
<dbReference type="PIRSF" id="PIRSF000478">
    <property type="entry name" value="TP_PyNP"/>
    <property type="match status" value="1"/>
</dbReference>
<dbReference type="SMART" id="SM00941">
    <property type="entry name" value="PYNP_C"/>
    <property type="match status" value="1"/>
</dbReference>
<dbReference type="SUPFAM" id="SSF52418">
    <property type="entry name" value="Nucleoside phosphorylase/phosphoribosyltransferase catalytic domain"/>
    <property type="match status" value="1"/>
</dbReference>
<dbReference type="SUPFAM" id="SSF47648">
    <property type="entry name" value="Nucleoside phosphorylase/phosphoribosyltransferase N-terminal domain"/>
    <property type="match status" value="1"/>
</dbReference>
<dbReference type="SUPFAM" id="SSF54680">
    <property type="entry name" value="Pyrimidine nucleoside phosphorylase C-terminal domain"/>
    <property type="match status" value="1"/>
</dbReference>
<dbReference type="PROSITE" id="PS00647">
    <property type="entry name" value="THYMID_PHOSPHORYLASE"/>
    <property type="match status" value="1"/>
</dbReference>
<name>TYPH_BURCJ</name>
<accession>B4EPB7</accession>
<reference key="1">
    <citation type="journal article" date="2009" name="J. Bacteriol.">
        <title>The genome of Burkholderia cenocepacia J2315, an epidemic pathogen of cystic fibrosis patients.</title>
        <authorList>
            <person name="Holden M.T."/>
            <person name="Seth-Smith H.M."/>
            <person name="Crossman L.C."/>
            <person name="Sebaihia M."/>
            <person name="Bentley S.D."/>
            <person name="Cerdeno-Tarraga A.M."/>
            <person name="Thomson N.R."/>
            <person name="Bason N."/>
            <person name="Quail M.A."/>
            <person name="Sharp S."/>
            <person name="Cherevach I."/>
            <person name="Churcher C."/>
            <person name="Goodhead I."/>
            <person name="Hauser H."/>
            <person name="Holroyd N."/>
            <person name="Mungall K."/>
            <person name="Scott P."/>
            <person name="Walker D."/>
            <person name="White B."/>
            <person name="Rose H."/>
            <person name="Iversen P."/>
            <person name="Mil-Homens D."/>
            <person name="Rocha E.P."/>
            <person name="Fialho A.M."/>
            <person name="Baldwin A."/>
            <person name="Dowson C."/>
            <person name="Barrell B.G."/>
            <person name="Govan J.R."/>
            <person name="Vandamme P."/>
            <person name="Hart C.A."/>
            <person name="Mahenthiralingam E."/>
            <person name="Parkhill J."/>
        </authorList>
    </citation>
    <scope>NUCLEOTIDE SEQUENCE [LARGE SCALE GENOMIC DNA]</scope>
    <source>
        <strain>ATCC BAA-245 / DSM 16553 / LMG 16656 / NCTC 13227 / J2315 / CF5610</strain>
    </source>
</reference>